<comment type="function">
    <text evidence="1">IF-3 binds to the 30S ribosomal subunit and shifts the equilibrium between 70S ribosomes and their 50S and 30S subunits in favor of the free subunits, thus enhancing the availability of 30S subunits on which protein synthesis initiation begins.</text>
</comment>
<comment type="subunit">
    <text evidence="1">Monomer.</text>
</comment>
<comment type="subcellular location">
    <subcellularLocation>
        <location evidence="1">Cytoplasm</location>
    </subcellularLocation>
</comment>
<comment type="similarity">
    <text evidence="1">Belongs to the IF-3 family.</text>
</comment>
<sequence length="180" mass="20593">MKGGKRVQTARPNRINSEIRAQEVRLTGLEGEQLGIVSLREALEKAEEAGVDLVEISPNAEPPVCRIMDYGKFLYEKSKSSKEQKKKQKVIQVKEIKFRPGTDEGDYQVKLRSLIRFLEEGDKAKITLRFRGREMAHQQIGMEVLNRVKNDLQELAVVESFPTKIEGRQMIMVLAPKKKQ</sequence>
<organism>
    <name type="scientific">Salmonella typhi</name>
    <dbReference type="NCBI Taxonomy" id="90370"/>
    <lineage>
        <taxon>Bacteria</taxon>
        <taxon>Pseudomonadati</taxon>
        <taxon>Pseudomonadota</taxon>
        <taxon>Gammaproteobacteria</taxon>
        <taxon>Enterobacterales</taxon>
        <taxon>Enterobacteriaceae</taxon>
        <taxon>Salmonella</taxon>
    </lineage>
</organism>
<dbReference type="EMBL" id="AL513382">
    <property type="protein sequence ID" value="CAD02019.1"/>
    <property type="molecule type" value="Genomic_DNA"/>
</dbReference>
<dbReference type="EMBL" id="AE014613">
    <property type="protein sequence ID" value="AAO68869.1"/>
    <property type="molecule type" value="Genomic_DNA"/>
</dbReference>
<dbReference type="RefSeq" id="NP_456178.3">
    <property type="nucleotide sequence ID" value="NC_003198.1"/>
</dbReference>
<dbReference type="RefSeq" id="WP_011106936.1">
    <property type="nucleotide sequence ID" value="NZ_WSUR01000011.1"/>
</dbReference>
<dbReference type="SMR" id="Q8Z6I3"/>
<dbReference type="STRING" id="220341.gene:17585711"/>
<dbReference type="KEGG" id="stt:t1214"/>
<dbReference type="KEGG" id="sty:STY1777"/>
<dbReference type="PATRIC" id="fig|220341.7.peg.1788"/>
<dbReference type="eggNOG" id="COG0290">
    <property type="taxonomic scope" value="Bacteria"/>
</dbReference>
<dbReference type="HOGENOM" id="CLU_054919_3_2_6"/>
<dbReference type="OMA" id="KCTVIFR"/>
<dbReference type="OrthoDB" id="9806014at2"/>
<dbReference type="Proteomes" id="UP000000541">
    <property type="component" value="Chromosome"/>
</dbReference>
<dbReference type="Proteomes" id="UP000002670">
    <property type="component" value="Chromosome"/>
</dbReference>
<dbReference type="GO" id="GO:0005829">
    <property type="term" value="C:cytosol"/>
    <property type="evidence" value="ECO:0007669"/>
    <property type="project" value="TreeGrafter"/>
</dbReference>
<dbReference type="GO" id="GO:0016020">
    <property type="term" value="C:membrane"/>
    <property type="evidence" value="ECO:0007669"/>
    <property type="project" value="TreeGrafter"/>
</dbReference>
<dbReference type="GO" id="GO:0043022">
    <property type="term" value="F:ribosome binding"/>
    <property type="evidence" value="ECO:0007669"/>
    <property type="project" value="TreeGrafter"/>
</dbReference>
<dbReference type="GO" id="GO:0003743">
    <property type="term" value="F:translation initiation factor activity"/>
    <property type="evidence" value="ECO:0007669"/>
    <property type="project" value="UniProtKB-UniRule"/>
</dbReference>
<dbReference type="GO" id="GO:0032790">
    <property type="term" value="P:ribosome disassembly"/>
    <property type="evidence" value="ECO:0007669"/>
    <property type="project" value="TreeGrafter"/>
</dbReference>
<dbReference type="FunFam" id="3.10.20.80:FF:000001">
    <property type="entry name" value="Translation initiation factor IF-3"/>
    <property type="match status" value="1"/>
</dbReference>
<dbReference type="FunFam" id="3.30.110.10:FF:000001">
    <property type="entry name" value="Translation initiation factor IF-3"/>
    <property type="match status" value="1"/>
</dbReference>
<dbReference type="Gene3D" id="3.30.110.10">
    <property type="entry name" value="Translation initiation factor 3 (IF-3), C-terminal domain"/>
    <property type="match status" value="1"/>
</dbReference>
<dbReference type="Gene3D" id="3.10.20.80">
    <property type="entry name" value="Translation initiation factor 3 (IF-3), N-terminal domain"/>
    <property type="match status" value="1"/>
</dbReference>
<dbReference type="HAMAP" id="MF_00080">
    <property type="entry name" value="IF_3"/>
    <property type="match status" value="1"/>
</dbReference>
<dbReference type="InterPro" id="IPR036788">
    <property type="entry name" value="T_IF-3_C_sf"/>
</dbReference>
<dbReference type="InterPro" id="IPR036787">
    <property type="entry name" value="T_IF-3_N_sf"/>
</dbReference>
<dbReference type="InterPro" id="IPR019813">
    <property type="entry name" value="Translation_initiation_fac3_CS"/>
</dbReference>
<dbReference type="InterPro" id="IPR001288">
    <property type="entry name" value="Translation_initiation_fac_3"/>
</dbReference>
<dbReference type="InterPro" id="IPR019815">
    <property type="entry name" value="Translation_initiation_fac_3_C"/>
</dbReference>
<dbReference type="InterPro" id="IPR019814">
    <property type="entry name" value="Translation_initiation_fac_3_N"/>
</dbReference>
<dbReference type="NCBIfam" id="TIGR00168">
    <property type="entry name" value="infC"/>
    <property type="match status" value="1"/>
</dbReference>
<dbReference type="PANTHER" id="PTHR10938">
    <property type="entry name" value="TRANSLATION INITIATION FACTOR IF-3"/>
    <property type="match status" value="1"/>
</dbReference>
<dbReference type="PANTHER" id="PTHR10938:SF0">
    <property type="entry name" value="TRANSLATION INITIATION FACTOR IF-3, MITOCHONDRIAL"/>
    <property type="match status" value="1"/>
</dbReference>
<dbReference type="Pfam" id="PF00707">
    <property type="entry name" value="IF3_C"/>
    <property type="match status" value="1"/>
</dbReference>
<dbReference type="Pfam" id="PF05198">
    <property type="entry name" value="IF3_N"/>
    <property type="match status" value="1"/>
</dbReference>
<dbReference type="SUPFAM" id="SSF55200">
    <property type="entry name" value="Translation initiation factor IF3, C-terminal domain"/>
    <property type="match status" value="1"/>
</dbReference>
<dbReference type="SUPFAM" id="SSF54364">
    <property type="entry name" value="Translation initiation factor IF3, N-terminal domain"/>
    <property type="match status" value="1"/>
</dbReference>
<dbReference type="PROSITE" id="PS00938">
    <property type="entry name" value="IF3"/>
    <property type="match status" value="1"/>
</dbReference>
<feature type="chain" id="PRO_0000177570" description="Translation initiation factor IF-3">
    <location>
        <begin position="1"/>
        <end position="180"/>
    </location>
</feature>
<accession>Q8Z6I3</accession>
<protein>
    <recommendedName>
        <fullName evidence="1">Translation initiation factor IF-3</fullName>
    </recommendedName>
</protein>
<keyword id="KW-0963">Cytoplasm</keyword>
<keyword id="KW-0396">Initiation factor</keyword>
<keyword id="KW-0648">Protein biosynthesis</keyword>
<name>IF3_SALTI</name>
<proteinExistence type="inferred from homology"/>
<evidence type="ECO:0000255" key="1">
    <source>
        <dbReference type="HAMAP-Rule" id="MF_00080"/>
    </source>
</evidence>
<gene>
    <name evidence="1" type="primary">infC</name>
    <name type="ordered locus">STY1777</name>
    <name type="ordered locus">t1214</name>
</gene>
<reference key="1">
    <citation type="journal article" date="2001" name="Nature">
        <title>Complete genome sequence of a multiple drug resistant Salmonella enterica serovar Typhi CT18.</title>
        <authorList>
            <person name="Parkhill J."/>
            <person name="Dougan G."/>
            <person name="James K.D."/>
            <person name="Thomson N.R."/>
            <person name="Pickard D."/>
            <person name="Wain J."/>
            <person name="Churcher C.M."/>
            <person name="Mungall K.L."/>
            <person name="Bentley S.D."/>
            <person name="Holden M.T.G."/>
            <person name="Sebaihia M."/>
            <person name="Baker S."/>
            <person name="Basham D."/>
            <person name="Brooks K."/>
            <person name="Chillingworth T."/>
            <person name="Connerton P."/>
            <person name="Cronin A."/>
            <person name="Davis P."/>
            <person name="Davies R.M."/>
            <person name="Dowd L."/>
            <person name="White N."/>
            <person name="Farrar J."/>
            <person name="Feltwell T."/>
            <person name="Hamlin N."/>
            <person name="Haque A."/>
            <person name="Hien T.T."/>
            <person name="Holroyd S."/>
            <person name="Jagels K."/>
            <person name="Krogh A."/>
            <person name="Larsen T.S."/>
            <person name="Leather S."/>
            <person name="Moule S."/>
            <person name="O'Gaora P."/>
            <person name="Parry C."/>
            <person name="Quail M.A."/>
            <person name="Rutherford K.M."/>
            <person name="Simmonds M."/>
            <person name="Skelton J."/>
            <person name="Stevens K."/>
            <person name="Whitehead S."/>
            <person name="Barrell B.G."/>
        </authorList>
    </citation>
    <scope>NUCLEOTIDE SEQUENCE [LARGE SCALE GENOMIC DNA]</scope>
    <source>
        <strain>CT18</strain>
    </source>
</reference>
<reference key="2">
    <citation type="journal article" date="2003" name="J. Bacteriol.">
        <title>Comparative genomics of Salmonella enterica serovar Typhi strains Ty2 and CT18.</title>
        <authorList>
            <person name="Deng W."/>
            <person name="Liou S.-R."/>
            <person name="Plunkett G. III"/>
            <person name="Mayhew G.F."/>
            <person name="Rose D.J."/>
            <person name="Burland V."/>
            <person name="Kodoyianni V."/>
            <person name="Schwartz D.C."/>
            <person name="Blattner F.R."/>
        </authorList>
    </citation>
    <scope>NUCLEOTIDE SEQUENCE [LARGE SCALE GENOMIC DNA]</scope>
    <source>
        <strain>ATCC 700931 / Ty2</strain>
    </source>
</reference>